<evidence type="ECO:0000250" key="1"/>
<evidence type="ECO:0000255" key="2"/>
<evidence type="ECO:0000305" key="3"/>
<reference key="1">
    <citation type="journal article" date="2005" name="Nature">
        <title>The genome of the social amoeba Dictyostelium discoideum.</title>
        <authorList>
            <person name="Eichinger L."/>
            <person name="Pachebat J.A."/>
            <person name="Gloeckner G."/>
            <person name="Rajandream M.A."/>
            <person name="Sucgang R."/>
            <person name="Berriman M."/>
            <person name="Song J."/>
            <person name="Olsen R."/>
            <person name="Szafranski K."/>
            <person name="Xu Q."/>
            <person name="Tunggal B."/>
            <person name="Kummerfeld S."/>
            <person name="Madera M."/>
            <person name="Konfortov B.A."/>
            <person name="Rivero F."/>
            <person name="Bankier A.T."/>
            <person name="Lehmann R."/>
            <person name="Hamlin N."/>
            <person name="Davies R."/>
            <person name="Gaudet P."/>
            <person name="Fey P."/>
            <person name="Pilcher K."/>
            <person name="Chen G."/>
            <person name="Saunders D."/>
            <person name="Sodergren E.J."/>
            <person name="Davis P."/>
            <person name="Kerhornou A."/>
            <person name="Nie X."/>
            <person name="Hall N."/>
            <person name="Anjard C."/>
            <person name="Hemphill L."/>
            <person name="Bason N."/>
            <person name="Farbrother P."/>
            <person name="Desany B."/>
            <person name="Just E."/>
            <person name="Morio T."/>
            <person name="Rost R."/>
            <person name="Churcher C.M."/>
            <person name="Cooper J."/>
            <person name="Haydock S."/>
            <person name="van Driessche N."/>
            <person name="Cronin A."/>
            <person name="Goodhead I."/>
            <person name="Muzny D.M."/>
            <person name="Mourier T."/>
            <person name="Pain A."/>
            <person name="Lu M."/>
            <person name="Harper D."/>
            <person name="Lindsay R."/>
            <person name="Hauser H."/>
            <person name="James K.D."/>
            <person name="Quiles M."/>
            <person name="Madan Babu M."/>
            <person name="Saito T."/>
            <person name="Buchrieser C."/>
            <person name="Wardroper A."/>
            <person name="Felder M."/>
            <person name="Thangavelu M."/>
            <person name="Johnson D."/>
            <person name="Knights A."/>
            <person name="Loulseged H."/>
            <person name="Mungall K.L."/>
            <person name="Oliver K."/>
            <person name="Price C."/>
            <person name="Quail M.A."/>
            <person name="Urushihara H."/>
            <person name="Hernandez J."/>
            <person name="Rabbinowitsch E."/>
            <person name="Steffen D."/>
            <person name="Sanders M."/>
            <person name="Ma J."/>
            <person name="Kohara Y."/>
            <person name="Sharp S."/>
            <person name="Simmonds M.N."/>
            <person name="Spiegler S."/>
            <person name="Tivey A."/>
            <person name="Sugano S."/>
            <person name="White B."/>
            <person name="Walker D."/>
            <person name="Woodward J.R."/>
            <person name="Winckler T."/>
            <person name="Tanaka Y."/>
            <person name="Shaulsky G."/>
            <person name="Schleicher M."/>
            <person name="Weinstock G.M."/>
            <person name="Rosenthal A."/>
            <person name="Cox E.C."/>
            <person name="Chisholm R.L."/>
            <person name="Gibbs R.A."/>
            <person name="Loomis W.F."/>
            <person name="Platzer M."/>
            <person name="Kay R.R."/>
            <person name="Williams J.G."/>
            <person name="Dear P.H."/>
            <person name="Noegel A.A."/>
            <person name="Barrell B.G."/>
            <person name="Kuspa A."/>
        </authorList>
    </citation>
    <scope>NUCLEOTIDE SEQUENCE [LARGE SCALE GENOMIC DNA]</scope>
    <source>
        <strain>AX4</strain>
    </source>
</reference>
<name>TAF13_DICDI</name>
<sequence>MSTKRKRMFSKELKHMMYGFGDVREPLHESIDLLEELVFEFIQEMTLKAAQVSNKRGKFQTEDLVFLVRKDPKKYYRVIELLRMNEELKKAKKAFDETNVEEEENV</sequence>
<gene>
    <name type="primary">taf13</name>
    <name type="ORF">DDB_G0292838</name>
</gene>
<keyword id="KW-0175">Coiled coil</keyword>
<keyword id="KW-0539">Nucleus</keyword>
<keyword id="KW-1185">Reference proteome</keyword>
<keyword id="KW-0804">Transcription</keyword>
<keyword id="KW-0805">Transcription regulation</keyword>
<protein>
    <recommendedName>
        <fullName>Transcription initiation factor TFIID subunit 13</fullName>
    </recommendedName>
    <alternativeName>
        <fullName>TBP-associated factor 13</fullName>
    </alternativeName>
</protein>
<organism>
    <name type="scientific">Dictyostelium discoideum</name>
    <name type="common">Social amoeba</name>
    <dbReference type="NCBI Taxonomy" id="44689"/>
    <lineage>
        <taxon>Eukaryota</taxon>
        <taxon>Amoebozoa</taxon>
        <taxon>Evosea</taxon>
        <taxon>Eumycetozoa</taxon>
        <taxon>Dictyostelia</taxon>
        <taxon>Dictyosteliales</taxon>
        <taxon>Dictyosteliaceae</taxon>
        <taxon>Dictyostelium</taxon>
    </lineage>
</organism>
<comment type="function">
    <text evidence="1">TFIID beta-specific TAFII.</text>
</comment>
<comment type="subunit">
    <text evidence="1">TFIID is composed of TATA binding protein (TBP) and a number of TBP-associated factors (TAFs).</text>
</comment>
<comment type="subcellular location">
    <subcellularLocation>
        <location evidence="1">Nucleus</location>
    </subcellularLocation>
</comment>
<comment type="similarity">
    <text evidence="3">Belongs to the TAF13 family.</text>
</comment>
<accession>Q54CN8</accession>
<dbReference type="EMBL" id="AAFI02000197">
    <property type="protein sequence ID" value="EAL60968.1"/>
    <property type="molecule type" value="Genomic_DNA"/>
</dbReference>
<dbReference type="RefSeq" id="XP_629378.1">
    <property type="nucleotide sequence ID" value="XM_629376.1"/>
</dbReference>
<dbReference type="SMR" id="Q54CN8"/>
<dbReference type="FunCoup" id="Q54CN8">
    <property type="interactions" value="365"/>
</dbReference>
<dbReference type="STRING" id="44689.Q54CN8"/>
<dbReference type="PaxDb" id="44689-DDB0231002"/>
<dbReference type="EnsemblProtists" id="EAL60968">
    <property type="protein sequence ID" value="EAL60968"/>
    <property type="gene ID" value="DDB_G0292838"/>
</dbReference>
<dbReference type="GeneID" id="8628896"/>
<dbReference type="KEGG" id="ddi:DDB_G0292838"/>
<dbReference type="dictyBase" id="DDB_G0292838">
    <property type="gene designation" value="taf13"/>
</dbReference>
<dbReference type="VEuPathDB" id="AmoebaDB:DDB_G0292838"/>
<dbReference type="eggNOG" id="KOG3901">
    <property type="taxonomic scope" value="Eukaryota"/>
</dbReference>
<dbReference type="HOGENOM" id="CLU_076665_4_0_1"/>
<dbReference type="InParanoid" id="Q54CN8"/>
<dbReference type="OMA" id="CERAMNV"/>
<dbReference type="PhylomeDB" id="Q54CN8"/>
<dbReference type="Reactome" id="R-DDI-674695">
    <property type="pathway name" value="RNA Polymerase II Pre-transcription Events"/>
</dbReference>
<dbReference type="Reactome" id="R-DDI-6807505">
    <property type="pathway name" value="RNA polymerase II transcribes snRNA genes"/>
</dbReference>
<dbReference type="Reactome" id="R-DDI-73776">
    <property type="pathway name" value="RNA Polymerase II Promoter Escape"/>
</dbReference>
<dbReference type="Reactome" id="R-DDI-73779">
    <property type="pathway name" value="RNA Polymerase II Transcription Pre-Initiation And Promoter Opening"/>
</dbReference>
<dbReference type="Reactome" id="R-DDI-75953">
    <property type="pathway name" value="RNA Polymerase II Transcription Initiation"/>
</dbReference>
<dbReference type="Reactome" id="R-DDI-76042">
    <property type="pathway name" value="RNA Polymerase II Transcription Initiation And Promoter Clearance"/>
</dbReference>
<dbReference type="PRO" id="PR:Q54CN8"/>
<dbReference type="Proteomes" id="UP000002195">
    <property type="component" value="Chromosome 6"/>
</dbReference>
<dbReference type="GO" id="GO:0005634">
    <property type="term" value="C:nucleus"/>
    <property type="evidence" value="ECO:0000250"/>
    <property type="project" value="dictyBase"/>
</dbReference>
<dbReference type="GO" id="GO:0005669">
    <property type="term" value="C:transcription factor TFIID complex"/>
    <property type="evidence" value="ECO:0000250"/>
    <property type="project" value="dictyBase"/>
</dbReference>
<dbReference type="GO" id="GO:0046982">
    <property type="term" value="F:protein heterodimerization activity"/>
    <property type="evidence" value="ECO:0007669"/>
    <property type="project" value="InterPro"/>
</dbReference>
<dbReference type="GO" id="GO:0006366">
    <property type="term" value="P:transcription by RNA polymerase II"/>
    <property type="evidence" value="ECO:0000318"/>
    <property type="project" value="GO_Central"/>
</dbReference>
<dbReference type="GO" id="GO:0006367">
    <property type="term" value="P:transcription initiation at RNA polymerase II promoter"/>
    <property type="evidence" value="ECO:0000250"/>
    <property type="project" value="dictyBase"/>
</dbReference>
<dbReference type="CDD" id="cd07978">
    <property type="entry name" value="HFD_TAF13"/>
    <property type="match status" value="1"/>
</dbReference>
<dbReference type="Gene3D" id="1.10.20.10">
    <property type="entry name" value="Histone, subunit A"/>
    <property type="match status" value="1"/>
</dbReference>
<dbReference type="InterPro" id="IPR009072">
    <property type="entry name" value="Histone-fold"/>
</dbReference>
<dbReference type="InterPro" id="IPR003195">
    <property type="entry name" value="TFIID_TAF13"/>
</dbReference>
<dbReference type="PANTHER" id="PTHR11380:SF5">
    <property type="entry name" value="TRANSCRIPTION INITIATION FACTOR TFIID SUBUNIT 13"/>
    <property type="match status" value="1"/>
</dbReference>
<dbReference type="PANTHER" id="PTHR11380">
    <property type="entry name" value="TRANSCRIPTION INITIATION FACTOR TFIID/SUPT3-RELATED"/>
    <property type="match status" value="1"/>
</dbReference>
<dbReference type="Pfam" id="PF02269">
    <property type="entry name" value="TFIID-18kDa"/>
    <property type="match status" value="1"/>
</dbReference>
<dbReference type="SUPFAM" id="SSF47113">
    <property type="entry name" value="Histone-fold"/>
    <property type="match status" value="1"/>
</dbReference>
<feature type="chain" id="PRO_0000328229" description="Transcription initiation factor TFIID subunit 13">
    <location>
        <begin position="1"/>
        <end position="106"/>
    </location>
</feature>
<feature type="domain" description="Histone-fold" evidence="3">
    <location>
        <begin position="8"/>
        <end position="51"/>
    </location>
</feature>
<feature type="coiled-coil region" evidence="2">
    <location>
        <begin position="77"/>
        <end position="106"/>
    </location>
</feature>
<proteinExistence type="inferred from homology"/>